<sequence>MKQESSFLAKLANGSLVLQILVGIIAGVALASFSHEWAKQVAFLGSLFVGALKAIAPILVFILVASSIANQKKNTQTNMRPIVVLYLLGTFAAALTAVILSMMFPTTLVLAAGVEGTSPPQGISEVISTLLFKLVDNPVNALMTGNYIGILAWGVGLGLALHHSSDSTKQVFADVSHGISQMVHFIIRLAPIGIFGLVAATFAETGFAAIAGYAQLLAVLLGAMAFIALIINPLIVYVKIKRNPYPLVIRCLRESGMTAFFTRSSAANIPVNMALCEKLKLHEDTYAVSIPLGATINMGGAAITITVLTLAAAHTLGIQVDLLTALLLSVVAAISACGASGVAGGSLLLIPLACSLFGISNDVAMQVVAVGFIIGVIQDAAETALNSSTDVIFTAAACEAAENKAKLG</sequence>
<protein>
    <recommendedName>
        <fullName evidence="1">Serine/threonine transporter SstT</fullName>
    </recommendedName>
    <alternativeName>
        <fullName evidence="1">Na(+)/serine-threonine symporter</fullName>
    </alternativeName>
</protein>
<accession>Q8ECL5</accession>
<reference key="1">
    <citation type="journal article" date="2002" name="Nat. Biotechnol.">
        <title>Genome sequence of the dissimilatory metal ion-reducing bacterium Shewanella oneidensis.</title>
        <authorList>
            <person name="Heidelberg J.F."/>
            <person name="Paulsen I.T."/>
            <person name="Nelson K.E."/>
            <person name="Gaidos E.J."/>
            <person name="Nelson W.C."/>
            <person name="Read T.D."/>
            <person name="Eisen J.A."/>
            <person name="Seshadri R."/>
            <person name="Ward N.L."/>
            <person name="Methe B.A."/>
            <person name="Clayton R.A."/>
            <person name="Meyer T."/>
            <person name="Tsapin A."/>
            <person name="Scott J."/>
            <person name="Beanan M.J."/>
            <person name="Brinkac L.M."/>
            <person name="Daugherty S.C."/>
            <person name="DeBoy R.T."/>
            <person name="Dodson R.J."/>
            <person name="Durkin A.S."/>
            <person name="Haft D.H."/>
            <person name="Kolonay J.F."/>
            <person name="Madupu R."/>
            <person name="Peterson J.D."/>
            <person name="Umayam L.A."/>
            <person name="White O."/>
            <person name="Wolf A.M."/>
            <person name="Vamathevan J.J."/>
            <person name="Weidman J.F."/>
            <person name="Impraim M."/>
            <person name="Lee K."/>
            <person name="Berry K.J."/>
            <person name="Lee C."/>
            <person name="Mueller J."/>
            <person name="Khouri H.M."/>
            <person name="Gill J."/>
            <person name="Utterback T.R."/>
            <person name="McDonald L.A."/>
            <person name="Feldblyum T.V."/>
            <person name="Smith H.O."/>
            <person name="Venter J.C."/>
            <person name="Nealson K.H."/>
            <person name="Fraser C.M."/>
        </authorList>
    </citation>
    <scope>NUCLEOTIDE SEQUENCE [LARGE SCALE GENOMIC DNA]</scope>
    <source>
        <strain>ATCC 700550 / JCM 31522 / CIP 106686 / LMG 19005 / NCIMB 14063 / MR-1</strain>
    </source>
</reference>
<name>SSTT_SHEON</name>
<keyword id="KW-0029">Amino-acid transport</keyword>
<keyword id="KW-0997">Cell inner membrane</keyword>
<keyword id="KW-1003">Cell membrane</keyword>
<keyword id="KW-0472">Membrane</keyword>
<keyword id="KW-1185">Reference proteome</keyword>
<keyword id="KW-0769">Symport</keyword>
<keyword id="KW-0812">Transmembrane</keyword>
<keyword id="KW-1133">Transmembrane helix</keyword>
<keyword id="KW-0813">Transport</keyword>
<comment type="function">
    <text evidence="1">Involved in the import of serine and threonine into the cell, with the concomitant import of sodium (symport system).</text>
</comment>
<comment type="catalytic activity">
    <reaction evidence="1">
        <text>L-serine(in) + Na(+)(in) = L-serine(out) + Na(+)(out)</text>
        <dbReference type="Rhea" id="RHEA:29575"/>
        <dbReference type="ChEBI" id="CHEBI:29101"/>
        <dbReference type="ChEBI" id="CHEBI:33384"/>
    </reaction>
    <physiologicalReaction direction="right-to-left" evidence="1">
        <dbReference type="Rhea" id="RHEA:29577"/>
    </physiologicalReaction>
</comment>
<comment type="catalytic activity">
    <reaction evidence="1">
        <text>L-threonine(in) + Na(+)(in) = L-threonine(out) + Na(+)(out)</text>
        <dbReference type="Rhea" id="RHEA:69999"/>
        <dbReference type="ChEBI" id="CHEBI:29101"/>
        <dbReference type="ChEBI" id="CHEBI:57926"/>
    </reaction>
    <physiologicalReaction direction="right-to-left" evidence="1">
        <dbReference type="Rhea" id="RHEA:70001"/>
    </physiologicalReaction>
</comment>
<comment type="subcellular location">
    <subcellularLocation>
        <location evidence="1">Cell inner membrane</location>
        <topology evidence="1">Multi-pass membrane protein</topology>
    </subcellularLocation>
</comment>
<comment type="similarity">
    <text evidence="1">Belongs to the dicarboxylate/amino acid:cation symporter (DAACS) (TC 2.A.23) family.</text>
</comment>
<feature type="chain" id="PRO_0000309124" description="Serine/threonine transporter SstT">
    <location>
        <begin position="1"/>
        <end position="408"/>
    </location>
</feature>
<feature type="transmembrane region" description="Helical" evidence="1">
    <location>
        <begin position="11"/>
        <end position="31"/>
    </location>
</feature>
<feature type="transmembrane region" description="Helical" evidence="1">
    <location>
        <begin position="43"/>
        <end position="63"/>
    </location>
</feature>
<feature type="transmembrane region" description="Helical" evidence="1">
    <location>
        <begin position="82"/>
        <end position="102"/>
    </location>
</feature>
<feature type="transmembrane region" description="Helical" evidence="1">
    <location>
        <begin position="141"/>
        <end position="161"/>
    </location>
</feature>
<feature type="transmembrane region" description="Helical" evidence="1">
    <location>
        <begin position="192"/>
        <end position="212"/>
    </location>
</feature>
<feature type="transmembrane region" description="Helical" evidence="1">
    <location>
        <begin position="216"/>
        <end position="236"/>
    </location>
</feature>
<feature type="transmembrane region" description="Helical" evidence="1">
    <location>
        <begin position="290"/>
        <end position="310"/>
    </location>
</feature>
<feature type="transmembrane region" description="Helical" evidence="1">
    <location>
        <begin position="316"/>
        <end position="336"/>
    </location>
</feature>
<feature type="transmembrane region" description="Helical" evidence="1">
    <location>
        <begin position="363"/>
        <end position="383"/>
    </location>
</feature>
<dbReference type="EMBL" id="AE014299">
    <property type="protein sequence ID" value="AAN56127.1"/>
    <property type="molecule type" value="Genomic_DNA"/>
</dbReference>
<dbReference type="RefSeq" id="NP_718683.1">
    <property type="nucleotide sequence ID" value="NC_004347.2"/>
</dbReference>
<dbReference type="RefSeq" id="WP_011073018.1">
    <property type="nucleotide sequence ID" value="NC_004347.2"/>
</dbReference>
<dbReference type="SMR" id="Q8ECL5"/>
<dbReference type="STRING" id="211586.SO_3122"/>
<dbReference type="PaxDb" id="211586-SO_3122"/>
<dbReference type="KEGG" id="son:SO_3122"/>
<dbReference type="PATRIC" id="fig|211586.12.peg.3022"/>
<dbReference type="eggNOG" id="COG3633">
    <property type="taxonomic scope" value="Bacteria"/>
</dbReference>
<dbReference type="HOGENOM" id="CLU_044581_0_0_6"/>
<dbReference type="OrthoDB" id="9768885at2"/>
<dbReference type="PhylomeDB" id="Q8ECL5"/>
<dbReference type="BioCyc" id="SONE211586:G1GMP-2893-MONOMER"/>
<dbReference type="Proteomes" id="UP000008186">
    <property type="component" value="Chromosome"/>
</dbReference>
<dbReference type="GO" id="GO:0005886">
    <property type="term" value="C:plasma membrane"/>
    <property type="evidence" value="ECO:0000318"/>
    <property type="project" value="GO_Central"/>
</dbReference>
<dbReference type="GO" id="GO:0005295">
    <property type="term" value="F:neutral L-amino acid:sodium symporter activity"/>
    <property type="evidence" value="ECO:0000318"/>
    <property type="project" value="GO_Central"/>
</dbReference>
<dbReference type="GO" id="GO:0032329">
    <property type="term" value="P:serine transport"/>
    <property type="evidence" value="ECO:0000318"/>
    <property type="project" value="GO_Central"/>
</dbReference>
<dbReference type="GO" id="GO:0015826">
    <property type="term" value="P:threonine transport"/>
    <property type="evidence" value="ECO:0007669"/>
    <property type="project" value="InterPro"/>
</dbReference>
<dbReference type="FunFam" id="1.10.3860.10:FF:000003">
    <property type="entry name" value="Serine/threonine transporter sstT"/>
    <property type="match status" value="1"/>
</dbReference>
<dbReference type="Gene3D" id="1.10.3860.10">
    <property type="entry name" value="Sodium:dicarboxylate symporter"/>
    <property type="match status" value="1"/>
</dbReference>
<dbReference type="HAMAP" id="MF_01582">
    <property type="entry name" value="Ser_Thr_transp_SstT"/>
    <property type="match status" value="1"/>
</dbReference>
<dbReference type="InterPro" id="IPR001991">
    <property type="entry name" value="Na-dicarboxylate_symporter"/>
</dbReference>
<dbReference type="InterPro" id="IPR036458">
    <property type="entry name" value="Na:dicarbo_symporter_sf"/>
</dbReference>
<dbReference type="InterPro" id="IPR023025">
    <property type="entry name" value="Ser_Thr_transp_SstT"/>
</dbReference>
<dbReference type="NCBIfam" id="NF010151">
    <property type="entry name" value="PRK13628.1"/>
    <property type="match status" value="1"/>
</dbReference>
<dbReference type="PANTHER" id="PTHR42865">
    <property type="entry name" value="PROTON/GLUTAMATE-ASPARTATE SYMPORTER"/>
    <property type="match status" value="1"/>
</dbReference>
<dbReference type="PANTHER" id="PTHR42865:SF8">
    <property type="entry name" value="SERINE_THREONINE TRANSPORTER SSTT"/>
    <property type="match status" value="1"/>
</dbReference>
<dbReference type="Pfam" id="PF00375">
    <property type="entry name" value="SDF"/>
    <property type="match status" value="1"/>
</dbReference>
<dbReference type="PRINTS" id="PR00173">
    <property type="entry name" value="EDTRNSPORT"/>
</dbReference>
<dbReference type="SUPFAM" id="SSF118215">
    <property type="entry name" value="Proton glutamate symport protein"/>
    <property type="match status" value="1"/>
</dbReference>
<proteinExistence type="inferred from homology"/>
<gene>
    <name evidence="1" type="primary">sstT</name>
    <name type="ordered locus">SO_3122</name>
</gene>
<evidence type="ECO:0000255" key="1">
    <source>
        <dbReference type="HAMAP-Rule" id="MF_01582"/>
    </source>
</evidence>
<organism>
    <name type="scientific">Shewanella oneidensis (strain ATCC 700550 / JCM 31522 / CIP 106686 / LMG 19005 / NCIMB 14063 / MR-1)</name>
    <dbReference type="NCBI Taxonomy" id="211586"/>
    <lineage>
        <taxon>Bacteria</taxon>
        <taxon>Pseudomonadati</taxon>
        <taxon>Pseudomonadota</taxon>
        <taxon>Gammaproteobacteria</taxon>
        <taxon>Alteromonadales</taxon>
        <taxon>Shewanellaceae</taxon>
        <taxon>Shewanella</taxon>
    </lineage>
</organism>